<accession>Q27757</accession>
<accession>O02653</accession>
<keyword id="KW-0067">ATP-binding</keyword>
<keyword id="KW-0455">Luminescence</keyword>
<keyword id="KW-0460">Magnesium</keyword>
<keyword id="KW-0479">Metal-binding</keyword>
<keyword id="KW-0503">Monooxygenase</keyword>
<keyword id="KW-0547">Nucleotide-binding</keyword>
<keyword id="KW-0560">Oxidoreductase</keyword>
<keyword id="KW-0576">Peroxisome</keyword>
<keyword id="KW-0599">Photoprotein</keyword>
<organism>
    <name type="scientific">Photuris pensylvanica</name>
    <name type="common">Pennsylania firefly</name>
    <dbReference type="NCBI Taxonomy" id="1710587"/>
    <lineage>
        <taxon>Eukaryota</taxon>
        <taxon>Metazoa</taxon>
        <taxon>Ecdysozoa</taxon>
        <taxon>Arthropoda</taxon>
        <taxon>Hexapoda</taxon>
        <taxon>Insecta</taxon>
        <taxon>Pterygota</taxon>
        <taxon>Neoptera</taxon>
        <taxon>Endopterygota</taxon>
        <taxon>Coleoptera</taxon>
        <taxon>Polyphaga</taxon>
        <taxon>Elateriformia</taxon>
        <taxon>Elateroidea</taxon>
        <taxon>Lampyridae</taxon>
        <taxon>Photurinae</taxon>
        <taxon>Photuris</taxon>
    </lineage>
</organism>
<name>LUCI_PHOPE</name>
<protein>
    <recommendedName>
        <fullName>Luciferin 4-monooxygenase</fullName>
        <shortName>Luciferase</shortName>
        <ecNumber evidence="2">1.13.12.7</ecNumber>
    </recommendedName>
</protein>
<reference key="1">
    <citation type="journal article" date="1997" name="Biochim. Biophys. Acta">
        <title>Cloning and sequencing of a cDNA for firefly luciferase from Photuris pennsylvanica.</title>
        <authorList>
            <person name="Ye L."/>
            <person name="Buck L.M."/>
            <person name="Schaeffer H.J."/>
            <person name="Leach F.R."/>
        </authorList>
    </citation>
    <scope>NUCLEOTIDE SEQUENCE [MRNA]</scope>
    <source>
        <tissue>Lantern</tissue>
    </source>
</reference>
<comment type="function">
    <text evidence="2">Produces green light with a wavelength of 562 nm.</text>
</comment>
<comment type="catalytic activity">
    <reaction evidence="2">
        <text>firefly D-luciferin + ATP + O2 = firefly oxyluciferin + hnu + AMP + CO2 + diphosphate</text>
        <dbReference type="Rhea" id="RHEA:10732"/>
        <dbReference type="ChEBI" id="CHEBI:15379"/>
        <dbReference type="ChEBI" id="CHEBI:16526"/>
        <dbReference type="ChEBI" id="CHEBI:16792"/>
        <dbReference type="ChEBI" id="CHEBI:30212"/>
        <dbReference type="ChEBI" id="CHEBI:30616"/>
        <dbReference type="ChEBI" id="CHEBI:33019"/>
        <dbReference type="ChEBI" id="CHEBI:58038"/>
        <dbReference type="ChEBI" id="CHEBI:456215"/>
        <dbReference type="EC" id="1.13.12.7"/>
    </reaction>
</comment>
<comment type="cofactor">
    <cofactor evidence="1">
        <name>Mg(2+)</name>
        <dbReference type="ChEBI" id="CHEBI:18420"/>
    </cofactor>
</comment>
<comment type="subcellular location">
    <subcellularLocation>
        <location evidence="1">Peroxisome</location>
    </subcellularLocation>
</comment>
<comment type="similarity">
    <text evidence="4">Belongs to the ATP-dependent AMP-binding enzyme family.</text>
</comment>
<dbReference type="EC" id="1.13.12.7" evidence="2"/>
<dbReference type="EMBL" id="U31240">
    <property type="protein sequence ID" value="AAB60897.1"/>
    <property type="molecule type" value="mRNA"/>
</dbReference>
<dbReference type="SMR" id="Q27757"/>
<dbReference type="BindingDB" id="Q27757"/>
<dbReference type="ChEMBL" id="CHEMBL5150"/>
<dbReference type="BRENDA" id="1.13.12.7">
    <property type="organism ID" value="10849"/>
</dbReference>
<dbReference type="GO" id="GO:0005777">
    <property type="term" value="C:peroxisome"/>
    <property type="evidence" value="ECO:0007669"/>
    <property type="project" value="UniProtKB-SubCell"/>
</dbReference>
<dbReference type="GO" id="GO:0005524">
    <property type="term" value="F:ATP binding"/>
    <property type="evidence" value="ECO:0007669"/>
    <property type="project" value="UniProtKB-KW"/>
</dbReference>
<dbReference type="GO" id="GO:0016405">
    <property type="term" value="F:CoA-ligase activity"/>
    <property type="evidence" value="ECO:0007669"/>
    <property type="project" value="TreeGrafter"/>
</dbReference>
<dbReference type="GO" id="GO:0046872">
    <property type="term" value="F:metal ion binding"/>
    <property type="evidence" value="ECO:0007669"/>
    <property type="project" value="UniProtKB-KW"/>
</dbReference>
<dbReference type="GO" id="GO:0047077">
    <property type="term" value="F:Photinus-luciferin 4-monooxygenase (ATP-hydrolyzing) activity"/>
    <property type="evidence" value="ECO:0007669"/>
    <property type="project" value="UniProtKB-EC"/>
</dbReference>
<dbReference type="GO" id="GO:0008218">
    <property type="term" value="P:bioluminescence"/>
    <property type="evidence" value="ECO:0007669"/>
    <property type="project" value="UniProtKB-KW"/>
</dbReference>
<dbReference type="CDD" id="cd17642">
    <property type="entry name" value="Firefly_Luc"/>
    <property type="match status" value="1"/>
</dbReference>
<dbReference type="FunFam" id="3.30.300.30:FF:000007">
    <property type="entry name" value="4-coumarate--CoA ligase 2"/>
    <property type="match status" value="1"/>
</dbReference>
<dbReference type="FunFam" id="3.40.50.12780:FF:000003">
    <property type="entry name" value="Long-chain-fatty-acid--CoA ligase FadD"/>
    <property type="match status" value="1"/>
</dbReference>
<dbReference type="Gene3D" id="3.30.300.30">
    <property type="match status" value="1"/>
</dbReference>
<dbReference type="Gene3D" id="3.40.50.980">
    <property type="match status" value="2"/>
</dbReference>
<dbReference type="Gene3D" id="2.30.38.10">
    <property type="entry name" value="Luciferase, Domain 3"/>
    <property type="match status" value="1"/>
</dbReference>
<dbReference type="InterPro" id="IPR025110">
    <property type="entry name" value="AMP-bd_C"/>
</dbReference>
<dbReference type="InterPro" id="IPR045851">
    <property type="entry name" value="AMP-bd_C_sf"/>
</dbReference>
<dbReference type="InterPro" id="IPR020845">
    <property type="entry name" value="AMP-binding_CS"/>
</dbReference>
<dbReference type="InterPro" id="IPR000873">
    <property type="entry name" value="AMP-dep_synth/lig_dom"/>
</dbReference>
<dbReference type="PANTHER" id="PTHR24096:SF423">
    <property type="entry name" value="GM05240P"/>
    <property type="match status" value="1"/>
</dbReference>
<dbReference type="PANTHER" id="PTHR24096">
    <property type="entry name" value="LONG-CHAIN-FATTY-ACID--COA LIGASE"/>
    <property type="match status" value="1"/>
</dbReference>
<dbReference type="Pfam" id="PF00501">
    <property type="entry name" value="AMP-binding"/>
    <property type="match status" value="1"/>
</dbReference>
<dbReference type="Pfam" id="PF13193">
    <property type="entry name" value="AMP-binding_C"/>
    <property type="match status" value="1"/>
</dbReference>
<dbReference type="SUPFAM" id="SSF56801">
    <property type="entry name" value="Acetyl-CoA synthetase-like"/>
    <property type="match status" value="1"/>
</dbReference>
<dbReference type="PROSITE" id="PS00455">
    <property type="entry name" value="AMP_BINDING"/>
    <property type="match status" value="1"/>
</dbReference>
<feature type="chain" id="PRO_0000193146" description="Luciferin 4-monooxygenase">
    <location>
        <begin position="1"/>
        <end position="545"/>
    </location>
</feature>
<feature type="short sequence motif" description="Microbody targeting signal" evidence="3">
    <location>
        <begin position="543"/>
        <end position="545"/>
    </location>
</feature>
<proteinExistence type="evidence at transcript level"/>
<evidence type="ECO:0000250" key="1"/>
<evidence type="ECO:0000250" key="2">
    <source>
        <dbReference type="UniProtKB" id="Q26304"/>
    </source>
</evidence>
<evidence type="ECO:0000255" key="3"/>
<evidence type="ECO:0000305" key="4"/>
<sequence>MEDKNILYGPEPFHPLADGTAGEQMFYALSRYADISGCIALTNAHTKENVLYEEFLKLSCRLAESFKKYGLKQNDTIAVCSENGLQFFLPLIASLYLGIIAAPVSDKYIERELIHSLGIVKPRIIFCSKNTFQKVLNVKSKLKYVETIIILDLNEDLGGYQCLNNFISQNSDINLDVKKFKPNSFNRDDQVALVMFSSGTTGVSKGVMLTHKNIVARFSHCKDPTFGNAINPTTAILTVIPFHHGFGMTTTLGYFTCGFRVALMHTFEEKLFLQSLQDYKVESTLLVPTLMAFFPKSALVEKYDLSHLKEIASGGAPLSKEIGEMVKKRFKLNFVRQGYGLTETTSAVLITPDTDVRPGSTGKIVPFHAVKVVDPTTGKILGPNETGELYFKGDMIMKSYYNNEEATKAIINKDGWLRSGDIAYYDNDGHFYIVDRLKSLIKYKGYQVAPAEIEGILLQHPYIVDAGVTGIPDEAAGELPAAGVVVQTGKYLNEQIVQNFVSSQVSTAKWLRGGVKFLDEIPKGSTGKIDRKVLRQMFEKHKSKL</sequence>